<protein>
    <recommendedName>
        <fullName evidence="1">Transcription antitermination protein NusB</fullName>
    </recommendedName>
    <alternativeName>
        <fullName evidence="1">Antitermination factor NusB</fullName>
    </alternativeName>
</protein>
<gene>
    <name evidence="1" type="primary">nusB</name>
    <name type="ordered locus">STH1849</name>
</gene>
<proteinExistence type="inferred from homology"/>
<reference key="1">
    <citation type="journal article" date="2004" name="Nucleic Acids Res.">
        <title>Genome sequence of Symbiobacterium thermophilum, an uncultivable bacterium that depends on microbial commensalism.</title>
        <authorList>
            <person name="Ueda K."/>
            <person name="Yamashita A."/>
            <person name="Ishikawa J."/>
            <person name="Shimada M."/>
            <person name="Watsuji T."/>
            <person name="Morimura K."/>
            <person name="Ikeda H."/>
            <person name="Hattori M."/>
            <person name="Beppu T."/>
        </authorList>
    </citation>
    <scope>NUCLEOTIDE SEQUENCE [LARGE SCALE GENOMIC DNA]</scope>
    <source>
        <strain>DSM 24528 / JCM 14929 / IAM 14863 / T</strain>
    </source>
</reference>
<keyword id="KW-1185">Reference proteome</keyword>
<keyword id="KW-0694">RNA-binding</keyword>
<keyword id="KW-0804">Transcription</keyword>
<keyword id="KW-0889">Transcription antitermination</keyword>
<keyword id="KW-0805">Transcription regulation</keyword>
<organism>
    <name type="scientific">Symbiobacterium thermophilum (strain DSM 24528 / JCM 14929 / IAM 14863 / T)</name>
    <dbReference type="NCBI Taxonomy" id="292459"/>
    <lineage>
        <taxon>Bacteria</taxon>
        <taxon>Bacillati</taxon>
        <taxon>Bacillota</taxon>
        <taxon>Clostridia</taxon>
        <taxon>Eubacteriales</taxon>
        <taxon>Symbiobacteriaceae</taxon>
        <taxon>Symbiobacterium</taxon>
    </lineage>
</organism>
<dbReference type="EMBL" id="AP006840">
    <property type="protein sequence ID" value="BAD40834.1"/>
    <property type="molecule type" value="Genomic_DNA"/>
</dbReference>
<dbReference type="RefSeq" id="WP_011195977.1">
    <property type="nucleotide sequence ID" value="NC_006177.1"/>
</dbReference>
<dbReference type="SMR" id="Q67NA9"/>
<dbReference type="STRING" id="292459.STH1849"/>
<dbReference type="KEGG" id="sth:STH1849"/>
<dbReference type="eggNOG" id="COG0781">
    <property type="taxonomic scope" value="Bacteria"/>
</dbReference>
<dbReference type="HOGENOM" id="CLU_087843_3_3_9"/>
<dbReference type="OrthoDB" id="9811381at2"/>
<dbReference type="Proteomes" id="UP000000417">
    <property type="component" value="Chromosome"/>
</dbReference>
<dbReference type="GO" id="GO:0005829">
    <property type="term" value="C:cytosol"/>
    <property type="evidence" value="ECO:0007669"/>
    <property type="project" value="TreeGrafter"/>
</dbReference>
<dbReference type="GO" id="GO:0003723">
    <property type="term" value="F:RNA binding"/>
    <property type="evidence" value="ECO:0007669"/>
    <property type="project" value="UniProtKB-UniRule"/>
</dbReference>
<dbReference type="GO" id="GO:0006353">
    <property type="term" value="P:DNA-templated transcription termination"/>
    <property type="evidence" value="ECO:0007669"/>
    <property type="project" value="UniProtKB-UniRule"/>
</dbReference>
<dbReference type="GO" id="GO:0031564">
    <property type="term" value="P:transcription antitermination"/>
    <property type="evidence" value="ECO:0007669"/>
    <property type="project" value="UniProtKB-KW"/>
</dbReference>
<dbReference type="Gene3D" id="1.10.940.10">
    <property type="entry name" value="NusB-like"/>
    <property type="match status" value="1"/>
</dbReference>
<dbReference type="HAMAP" id="MF_00073">
    <property type="entry name" value="NusB"/>
    <property type="match status" value="1"/>
</dbReference>
<dbReference type="InterPro" id="IPR035926">
    <property type="entry name" value="NusB-like_sf"/>
</dbReference>
<dbReference type="InterPro" id="IPR011605">
    <property type="entry name" value="NusB_fam"/>
</dbReference>
<dbReference type="InterPro" id="IPR006027">
    <property type="entry name" value="NusB_RsmB_TIM44"/>
</dbReference>
<dbReference type="NCBIfam" id="TIGR01951">
    <property type="entry name" value="nusB"/>
    <property type="match status" value="1"/>
</dbReference>
<dbReference type="PANTHER" id="PTHR11078:SF3">
    <property type="entry name" value="ANTITERMINATION NUSB DOMAIN-CONTAINING PROTEIN"/>
    <property type="match status" value="1"/>
</dbReference>
<dbReference type="PANTHER" id="PTHR11078">
    <property type="entry name" value="N UTILIZATION SUBSTANCE PROTEIN B-RELATED"/>
    <property type="match status" value="1"/>
</dbReference>
<dbReference type="Pfam" id="PF01029">
    <property type="entry name" value="NusB"/>
    <property type="match status" value="1"/>
</dbReference>
<dbReference type="SUPFAM" id="SSF48013">
    <property type="entry name" value="NusB-like"/>
    <property type="match status" value="1"/>
</dbReference>
<name>NUSB_SYMTH</name>
<evidence type="ECO:0000255" key="1">
    <source>
        <dbReference type="HAMAP-Rule" id="MF_00073"/>
    </source>
</evidence>
<sequence length="153" mass="16960">MSRRKARELALQALFQMDIAGTDPDTAVAQALTRETEPDWAPDRLEEESAEFARRLVRGAWQHREESDRLIAQYARGWRVERMAAVDRAILRMAVYEIVHSEDVPDSVAVAEAVELAKTFSTADSSRFVNGILGSVIRGMKGAAGADEAVSRD</sequence>
<feature type="chain" id="PRO_0000265610" description="Transcription antitermination protein NusB">
    <location>
        <begin position="1"/>
        <end position="153"/>
    </location>
</feature>
<accession>Q67NA9</accession>
<comment type="function">
    <text evidence="1">Involved in transcription antitermination. Required for transcription of ribosomal RNA (rRNA) genes. Binds specifically to the boxA antiterminator sequence of the ribosomal RNA (rrn) operons.</text>
</comment>
<comment type="similarity">
    <text evidence="1">Belongs to the NusB family.</text>
</comment>